<name>HIS8_SALTY</name>
<reference key="1">
    <citation type="journal article" date="1988" name="J. Mol. Biol.">
        <title>Structure and function of the Salmonella typhimurium and Escherichia coli K-12 histidine operons.</title>
        <authorList>
            <person name="Carlomagno M.S."/>
            <person name="Chiariotti L."/>
            <person name="Alifano P."/>
            <person name="Nappo A.G."/>
            <person name="Bruni C.B."/>
        </authorList>
    </citation>
    <scope>NUCLEOTIDE SEQUENCE [GENOMIC DNA]</scope>
    <source>
        <strain>LT2</strain>
    </source>
</reference>
<reference key="2">
    <citation type="submission" date="1989-08" db="EMBL/GenBank/DDBJ databases">
        <authorList>
            <person name="Barnes W.M."/>
            <person name="Husson R.N."/>
            <person name="Whittier R."/>
        </authorList>
    </citation>
    <scope>NUCLEOTIDE SEQUENCE [GENOMIC DNA]</scope>
    <source>
        <strain>LT2</strain>
    </source>
</reference>
<reference key="3">
    <citation type="journal article" date="2001" name="Nature">
        <title>Complete genome sequence of Salmonella enterica serovar Typhimurium LT2.</title>
        <authorList>
            <person name="McClelland M."/>
            <person name="Sanderson K.E."/>
            <person name="Spieth J."/>
            <person name="Clifton S.W."/>
            <person name="Latreille P."/>
            <person name="Courtney L."/>
            <person name="Porwollik S."/>
            <person name="Ali J."/>
            <person name="Dante M."/>
            <person name="Du F."/>
            <person name="Hou S."/>
            <person name="Layman D."/>
            <person name="Leonard S."/>
            <person name="Nguyen C."/>
            <person name="Scott K."/>
            <person name="Holmes A."/>
            <person name="Grewal N."/>
            <person name="Mulvaney E."/>
            <person name="Ryan E."/>
            <person name="Sun H."/>
            <person name="Florea L."/>
            <person name="Miller W."/>
            <person name="Stoneking T."/>
            <person name="Nhan M."/>
            <person name="Waterston R."/>
            <person name="Wilson R.K."/>
        </authorList>
    </citation>
    <scope>NUCLEOTIDE SEQUENCE [LARGE SCALE GENOMIC DNA]</scope>
    <source>
        <strain>LT2 / SGSC1412 / ATCC 700720</strain>
    </source>
</reference>
<keyword id="KW-0028">Amino-acid biosynthesis</keyword>
<keyword id="KW-0032">Aminotransferase</keyword>
<keyword id="KW-0368">Histidine biosynthesis</keyword>
<keyword id="KW-0663">Pyridoxal phosphate</keyword>
<keyword id="KW-1185">Reference proteome</keyword>
<keyword id="KW-0808">Transferase</keyword>
<dbReference type="EC" id="2.6.1.9"/>
<dbReference type="EMBL" id="X13464">
    <property type="protein sequence ID" value="CAA31824.1"/>
    <property type="molecule type" value="Genomic_DNA"/>
</dbReference>
<dbReference type="EMBL" id="J01804">
    <property type="protein sequence ID" value="AAA88616.1"/>
    <property type="molecule type" value="Genomic_DNA"/>
</dbReference>
<dbReference type="EMBL" id="AE006468">
    <property type="protein sequence ID" value="AAL20977.1"/>
    <property type="molecule type" value="Genomic_DNA"/>
</dbReference>
<dbReference type="PIR" id="JS0158">
    <property type="entry name" value="XNEBHC"/>
</dbReference>
<dbReference type="RefSeq" id="NP_461018.1">
    <property type="nucleotide sequence ID" value="NC_003197.2"/>
</dbReference>
<dbReference type="RefSeq" id="WP_000102713.1">
    <property type="nucleotide sequence ID" value="NC_003197.2"/>
</dbReference>
<dbReference type="SMR" id="P10369"/>
<dbReference type="STRING" id="99287.STM2073"/>
<dbReference type="PaxDb" id="99287-STM2073"/>
<dbReference type="GeneID" id="1253594"/>
<dbReference type="KEGG" id="stm:STM2073"/>
<dbReference type="PATRIC" id="fig|99287.12.peg.2195"/>
<dbReference type="HOGENOM" id="CLU_017584_3_1_6"/>
<dbReference type="OMA" id="NFVQFGR"/>
<dbReference type="PhylomeDB" id="P10369"/>
<dbReference type="BioCyc" id="SENT99287:STM2073-MONOMER"/>
<dbReference type="UniPathway" id="UPA00031">
    <property type="reaction ID" value="UER00012"/>
</dbReference>
<dbReference type="Proteomes" id="UP000001014">
    <property type="component" value="Chromosome"/>
</dbReference>
<dbReference type="GO" id="GO:0004400">
    <property type="term" value="F:histidinol-phosphate transaminase activity"/>
    <property type="evidence" value="ECO:0007669"/>
    <property type="project" value="UniProtKB-UniRule"/>
</dbReference>
<dbReference type="GO" id="GO:0030170">
    <property type="term" value="F:pyridoxal phosphate binding"/>
    <property type="evidence" value="ECO:0007669"/>
    <property type="project" value="InterPro"/>
</dbReference>
<dbReference type="GO" id="GO:0000105">
    <property type="term" value="P:L-histidine biosynthetic process"/>
    <property type="evidence" value="ECO:0007669"/>
    <property type="project" value="UniProtKB-UniRule"/>
</dbReference>
<dbReference type="CDD" id="cd00609">
    <property type="entry name" value="AAT_like"/>
    <property type="match status" value="1"/>
</dbReference>
<dbReference type="FunFam" id="3.40.640.10:FF:000032">
    <property type="entry name" value="Histidinol-phosphate aminotransferase"/>
    <property type="match status" value="1"/>
</dbReference>
<dbReference type="Gene3D" id="3.90.1150.10">
    <property type="entry name" value="Aspartate Aminotransferase, domain 1"/>
    <property type="match status" value="1"/>
</dbReference>
<dbReference type="Gene3D" id="3.40.640.10">
    <property type="entry name" value="Type I PLP-dependent aspartate aminotransferase-like (Major domain)"/>
    <property type="match status" value="1"/>
</dbReference>
<dbReference type="HAMAP" id="MF_01023">
    <property type="entry name" value="HisC_aminotrans_2"/>
    <property type="match status" value="1"/>
</dbReference>
<dbReference type="InterPro" id="IPR001917">
    <property type="entry name" value="Aminotrans_II_pyridoxalP_BS"/>
</dbReference>
<dbReference type="InterPro" id="IPR004839">
    <property type="entry name" value="Aminotransferase_I/II_large"/>
</dbReference>
<dbReference type="InterPro" id="IPR005861">
    <property type="entry name" value="HisP_aminotrans"/>
</dbReference>
<dbReference type="InterPro" id="IPR015424">
    <property type="entry name" value="PyrdxlP-dep_Trfase"/>
</dbReference>
<dbReference type="InterPro" id="IPR015421">
    <property type="entry name" value="PyrdxlP-dep_Trfase_major"/>
</dbReference>
<dbReference type="InterPro" id="IPR015422">
    <property type="entry name" value="PyrdxlP-dep_Trfase_small"/>
</dbReference>
<dbReference type="NCBIfam" id="TIGR01141">
    <property type="entry name" value="hisC"/>
    <property type="match status" value="1"/>
</dbReference>
<dbReference type="PANTHER" id="PTHR42885:SF2">
    <property type="entry name" value="HISTIDINOL-PHOSPHATE AMINOTRANSFERASE"/>
    <property type="match status" value="1"/>
</dbReference>
<dbReference type="PANTHER" id="PTHR42885">
    <property type="entry name" value="HISTIDINOL-PHOSPHATE AMINOTRANSFERASE-RELATED"/>
    <property type="match status" value="1"/>
</dbReference>
<dbReference type="Pfam" id="PF00155">
    <property type="entry name" value="Aminotran_1_2"/>
    <property type="match status" value="1"/>
</dbReference>
<dbReference type="SUPFAM" id="SSF53383">
    <property type="entry name" value="PLP-dependent transferases"/>
    <property type="match status" value="1"/>
</dbReference>
<dbReference type="PROSITE" id="PS00599">
    <property type="entry name" value="AA_TRANSFER_CLASS_2"/>
    <property type="match status" value="1"/>
</dbReference>
<protein>
    <recommendedName>
        <fullName>Histidinol-phosphate aminotransferase</fullName>
        <ecNumber>2.6.1.9</ecNumber>
    </recommendedName>
    <alternativeName>
        <fullName>Imidazole acetol-phosphate transaminase</fullName>
    </alternativeName>
</protein>
<sequence length="359" mass="39715">MSTENTLSVADLARENVRNLVPYQSARRLGGNGDVWLNANEFPTAVEFQLTQQTLNRYPECQPKAVIENYAQYAGVKPEQVLVSRGADEGIELVIRAFCEPGKDAILYCPPTYGMYSVSAETIGVERRTVPALENWQLDLQGISDNLDGTKVVFVCSPNNPTGQLINPQDLRTLLELTRGKAIVVADEAYIEFCPQATLTGWLVEYPHLVILRTLSKAFALAGLRCGFTLANEEVINLLLKVIAPYPLSTPVADIAAQALCPQGINAMRDRVAQTVQERQYLVNALQQTACVEHVFDSETNYILARFTASSSVFKSLWDQGIILRDQNKQPSLSGCLRITVGTRQENQRVIDALRAEPV</sequence>
<feature type="chain" id="PRO_0000153444" description="Histidinol-phosphate aminotransferase">
    <location>
        <begin position="1"/>
        <end position="359"/>
    </location>
</feature>
<feature type="modified residue" description="N6-(pyridoxal phosphate)lysine" evidence="1">
    <location>
        <position position="217"/>
    </location>
</feature>
<feature type="sequence conflict" description="In Ref. 2; AAA88616." evidence="2" ref="2">
    <original>DGTKVVFVCSPNNPTGQ</original>
    <variation>TAQKWCSFVAPIILPDN</variation>
    <location>
        <begin position="148"/>
        <end position="164"/>
    </location>
</feature>
<feature type="sequence conflict" description="In Ref. 1; CAA31824." evidence="2" ref="1">
    <original>C</original>
    <variation>R</variation>
    <location>
        <position position="226"/>
    </location>
</feature>
<feature type="sequence conflict" description="In Ref. 1; CAA31824." evidence="2" ref="1">
    <original>L</original>
    <variation>S</variation>
    <location>
        <position position="260"/>
    </location>
</feature>
<feature type="sequence conflict" description="In Ref. 1; CAA31824." evidence="2" ref="1">
    <original>GI</original>
    <variation>ES</variation>
    <location>
        <begin position="264"/>
        <end position="265"/>
    </location>
</feature>
<feature type="sequence conflict" description="In Ref. 1; CAA31824." evidence="2" ref="1">
    <original>R</original>
    <variation>P</variation>
    <location>
        <position position="349"/>
    </location>
</feature>
<accession>P10369</accession>
<comment type="catalytic activity">
    <reaction>
        <text>L-histidinol phosphate + 2-oxoglutarate = 3-(imidazol-4-yl)-2-oxopropyl phosphate + L-glutamate</text>
        <dbReference type="Rhea" id="RHEA:23744"/>
        <dbReference type="ChEBI" id="CHEBI:16810"/>
        <dbReference type="ChEBI" id="CHEBI:29985"/>
        <dbReference type="ChEBI" id="CHEBI:57766"/>
        <dbReference type="ChEBI" id="CHEBI:57980"/>
        <dbReference type="EC" id="2.6.1.9"/>
    </reaction>
</comment>
<comment type="cofactor">
    <cofactor evidence="1">
        <name>pyridoxal 5'-phosphate</name>
        <dbReference type="ChEBI" id="CHEBI:597326"/>
    </cofactor>
</comment>
<comment type="pathway">
    <text>Amino-acid biosynthesis; L-histidine biosynthesis; L-histidine from 5-phospho-alpha-D-ribose 1-diphosphate: step 7/9.</text>
</comment>
<comment type="subunit">
    <text evidence="1">Homodimer.</text>
</comment>
<comment type="similarity">
    <text evidence="2">Belongs to the class-II pyridoxal-phosphate-dependent aminotransferase family. Histidinol-phosphate aminotransferase subfamily.</text>
</comment>
<organism>
    <name type="scientific">Salmonella typhimurium (strain LT2 / SGSC1412 / ATCC 700720)</name>
    <dbReference type="NCBI Taxonomy" id="99287"/>
    <lineage>
        <taxon>Bacteria</taxon>
        <taxon>Pseudomonadati</taxon>
        <taxon>Pseudomonadota</taxon>
        <taxon>Gammaproteobacteria</taxon>
        <taxon>Enterobacterales</taxon>
        <taxon>Enterobacteriaceae</taxon>
        <taxon>Salmonella</taxon>
    </lineage>
</organism>
<evidence type="ECO:0000250" key="1"/>
<evidence type="ECO:0000305" key="2"/>
<proteinExistence type="inferred from homology"/>
<gene>
    <name type="primary">hisC</name>
    <name type="ordered locus">STM2073</name>
</gene>